<keyword id="KW-1185">Reference proteome</keyword>
<keyword id="KW-0687">Ribonucleoprotein</keyword>
<keyword id="KW-0689">Ribosomal protein</keyword>
<keyword id="KW-0694">RNA-binding</keyword>
<keyword id="KW-0699">rRNA-binding</keyword>
<organism>
    <name type="scientific">Buchnera aphidicola subsp. Baizongia pistaciae (strain Bp)</name>
    <dbReference type="NCBI Taxonomy" id="224915"/>
    <lineage>
        <taxon>Bacteria</taxon>
        <taxon>Pseudomonadati</taxon>
        <taxon>Pseudomonadota</taxon>
        <taxon>Gammaproteobacteria</taxon>
        <taxon>Enterobacterales</taxon>
        <taxon>Erwiniaceae</taxon>
        <taxon>Buchnera</taxon>
    </lineage>
</organism>
<evidence type="ECO:0000255" key="1">
    <source>
        <dbReference type="HAMAP-Rule" id="MF_00360"/>
    </source>
</evidence>
<evidence type="ECO:0000305" key="2"/>
<gene>
    <name evidence="1" type="primary">rpsF</name>
    <name type="ordered locus">bbp_510</name>
</gene>
<proteinExistence type="inferred from homology"/>
<protein>
    <recommendedName>
        <fullName evidence="1">Small ribosomal subunit protein bS6</fullName>
    </recommendedName>
    <alternativeName>
        <fullName evidence="2">30S ribosomal protein S6</fullName>
    </alternativeName>
</protein>
<name>RS6_BUCBP</name>
<accession>Q89A41</accession>
<feature type="chain" id="PRO_0000176742" description="Small ribosomal subunit protein bS6">
    <location>
        <begin position="1"/>
        <end position="119"/>
    </location>
</feature>
<dbReference type="EMBL" id="AE016826">
    <property type="protein sequence ID" value="AAO27213.1"/>
    <property type="molecule type" value="Genomic_DNA"/>
</dbReference>
<dbReference type="RefSeq" id="WP_011091614.1">
    <property type="nucleotide sequence ID" value="NC_004545.1"/>
</dbReference>
<dbReference type="SMR" id="Q89A41"/>
<dbReference type="STRING" id="224915.bbp_510"/>
<dbReference type="KEGG" id="bab:bbp_510"/>
<dbReference type="eggNOG" id="COG0360">
    <property type="taxonomic scope" value="Bacteria"/>
</dbReference>
<dbReference type="HOGENOM" id="CLU_113441_6_1_6"/>
<dbReference type="OrthoDB" id="9812702at2"/>
<dbReference type="Proteomes" id="UP000000601">
    <property type="component" value="Chromosome"/>
</dbReference>
<dbReference type="GO" id="GO:0022627">
    <property type="term" value="C:cytosolic small ribosomal subunit"/>
    <property type="evidence" value="ECO:0007669"/>
    <property type="project" value="TreeGrafter"/>
</dbReference>
<dbReference type="GO" id="GO:0070181">
    <property type="term" value="F:small ribosomal subunit rRNA binding"/>
    <property type="evidence" value="ECO:0007669"/>
    <property type="project" value="TreeGrafter"/>
</dbReference>
<dbReference type="GO" id="GO:0003735">
    <property type="term" value="F:structural constituent of ribosome"/>
    <property type="evidence" value="ECO:0007669"/>
    <property type="project" value="InterPro"/>
</dbReference>
<dbReference type="GO" id="GO:0006412">
    <property type="term" value="P:translation"/>
    <property type="evidence" value="ECO:0007669"/>
    <property type="project" value="UniProtKB-UniRule"/>
</dbReference>
<dbReference type="CDD" id="cd00473">
    <property type="entry name" value="bS6"/>
    <property type="match status" value="1"/>
</dbReference>
<dbReference type="Gene3D" id="3.30.70.60">
    <property type="match status" value="1"/>
</dbReference>
<dbReference type="HAMAP" id="MF_00360">
    <property type="entry name" value="Ribosomal_bS6"/>
    <property type="match status" value="1"/>
</dbReference>
<dbReference type="InterPro" id="IPR000529">
    <property type="entry name" value="Ribosomal_bS6"/>
</dbReference>
<dbReference type="InterPro" id="IPR020815">
    <property type="entry name" value="Ribosomal_bS6_CS"/>
</dbReference>
<dbReference type="InterPro" id="IPR035980">
    <property type="entry name" value="Ribosomal_bS6_sf"/>
</dbReference>
<dbReference type="InterPro" id="IPR020814">
    <property type="entry name" value="Ribosomal_S6_plastid/chlpt"/>
</dbReference>
<dbReference type="InterPro" id="IPR014717">
    <property type="entry name" value="Transl_elong_EF1B/ribsomal_bS6"/>
</dbReference>
<dbReference type="NCBIfam" id="TIGR00166">
    <property type="entry name" value="S6"/>
    <property type="match status" value="1"/>
</dbReference>
<dbReference type="PANTHER" id="PTHR21011">
    <property type="entry name" value="MITOCHONDRIAL 28S RIBOSOMAL PROTEIN S6"/>
    <property type="match status" value="1"/>
</dbReference>
<dbReference type="PANTHER" id="PTHR21011:SF1">
    <property type="entry name" value="SMALL RIBOSOMAL SUBUNIT PROTEIN BS6M"/>
    <property type="match status" value="1"/>
</dbReference>
<dbReference type="Pfam" id="PF01250">
    <property type="entry name" value="Ribosomal_S6"/>
    <property type="match status" value="1"/>
</dbReference>
<dbReference type="SUPFAM" id="SSF54995">
    <property type="entry name" value="Ribosomal protein S6"/>
    <property type="match status" value="1"/>
</dbReference>
<dbReference type="PROSITE" id="PS01048">
    <property type="entry name" value="RIBOSOMAL_S6"/>
    <property type="match status" value="1"/>
</dbReference>
<comment type="function">
    <text evidence="1">Binds together with bS18 to 16S ribosomal RNA.</text>
</comment>
<comment type="similarity">
    <text evidence="1">Belongs to the bacterial ribosomal protein bS6 family.</text>
</comment>
<reference key="1">
    <citation type="journal article" date="2003" name="Proc. Natl. Acad. Sci. U.S.A.">
        <title>Reductive genome evolution in Buchnera aphidicola.</title>
        <authorList>
            <person name="van Ham R.C.H.J."/>
            <person name="Kamerbeek J."/>
            <person name="Palacios C."/>
            <person name="Rausell C."/>
            <person name="Abascal F."/>
            <person name="Bastolla U."/>
            <person name="Fernandez J.M."/>
            <person name="Jimenez L."/>
            <person name="Postigo M."/>
            <person name="Silva F.J."/>
            <person name="Tamames J."/>
            <person name="Viguera E."/>
            <person name="Latorre A."/>
            <person name="Valencia A."/>
            <person name="Moran F."/>
            <person name="Moya A."/>
        </authorList>
    </citation>
    <scope>NUCLEOTIDE SEQUENCE [LARGE SCALE GENOMIC DNA]</scope>
    <source>
        <strain>Bp</strain>
    </source>
</reference>
<sequence length="119" mass="14178">MRHYEIILLIHPDCSEKLPIMIEKFKKLVIGYKGRIHRLEDWGRRQLAYSINKLHKAHYFLMNIEVPSNCIQDLSNTFRYDDLVIRNIIMHVKKSVTEISPMLKSKEDKLDKKDRVVVS</sequence>